<proteinExistence type="evidence at protein level"/>
<sequence>MSGASEVPSFRWTQSLRRGLSHFTTSAKGDVLRDAKSLVDGLDFNQVSQVQRVMRKDKRSDDDLSKLRDLNRSVDSLMVMKNKQNNVSLKIGSLSKDELMDLATDLEKLKRKINLGDRQGPGVYQGNLTSAQLEKRSEILKSLGFQPRANQNGVVKVWDIKNPKLLINQFGSIPALTIACMSVQGAEQMNDVVQGLTSLGLLYTVKYPNLDDLDKLSKDHPCLEFITKEESANNISGYNLSLSAAVKAGACLVDGGNMLETILVKPDNFQDIVKSLLVVKRQEKMFVNEKPGLRNPYENILYKLCLSGEGWPYIGSRSQIVGRAWENTTVDLSKEVVYGPSAPVKNGGNMRLSPLSDTQEAVIKEAIGKLDMDETIWIDIEGPPNDPVELAIYQPSTGNYIHCFRVPHDEKGFKNGSKYSHGILLRDIENARSGLLSRILMRLPQKVVFTCQGSDDIQKLLQMNGRPDIATIDMSFSSEQARFFEGVVWEKFGHLCTRHNGVVLSRKKKGGNSGEPHCALLDCIIFQAAFEGQVTGQIPKPLLPNSLIFKDEPRVAM</sequence>
<gene>
    <name evidence="1" type="primary">N</name>
</gene>
<name>NCAP_LATVB</name>
<protein>
    <recommendedName>
        <fullName evidence="1">Nucleoprotein</fullName>
        <ecNumber evidence="1">3.1.13.-</ecNumber>
    </recommendedName>
    <alternativeName>
        <fullName evidence="1">Nucleocapsid protein</fullName>
    </alternativeName>
    <alternativeName>
        <fullName evidence="1">Protein N</fullName>
    </alternativeName>
</protein>
<feature type="chain" id="PRO_0000361009" description="Nucleoprotein">
    <location>
        <begin position="1"/>
        <end position="557"/>
    </location>
</feature>
<feature type="region of interest" description="Binding site for the cap structure m7GTP" evidence="1">
    <location>
        <begin position="54"/>
        <end position="235"/>
    </location>
</feature>
<feature type="binding site" evidence="1">
    <location>
        <position position="379"/>
    </location>
    <ligand>
        <name>Mn(2+)</name>
        <dbReference type="ChEBI" id="CHEBI:29035"/>
    </ligand>
</feature>
<feature type="binding site" evidence="1">
    <location>
        <position position="381"/>
    </location>
    <ligand>
        <name>Mn(2+)</name>
        <dbReference type="ChEBI" id="CHEBI:29035"/>
    </ligand>
</feature>
<feature type="binding site" evidence="1">
    <location>
        <position position="389"/>
    </location>
    <ligand>
        <name>Zn(2+)</name>
        <dbReference type="ChEBI" id="CHEBI:29105"/>
    </ligand>
</feature>
<feature type="binding site" evidence="1">
    <location>
        <position position="496"/>
    </location>
    <ligand>
        <name>Zn(2+)</name>
        <dbReference type="ChEBI" id="CHEBI:29105"/>
    </ligand>
</feature>
<feature type="binding site" evidence="1">
    <location>
        <position position="499"/>
    </location>
    <ligand>
        <name>Zn(2+)</name>
        <dbReference type="ChEBI" id="CHEBI:29105"/>
    </ligand>
</feature>
<feature type="binding site" evidence="1">
    <location>
        <position position="518"/>
    </location>
    <ligand>
        <name>Zn(2+)</name>
        <dbReference type="ChEBI" id="CHEBI:29105"/>
    </ligand>
</feature>
<feature type="binding site" evidence="1">
    <location>
        <position position="522"/>
    </location>
    <ligand>
        <name>Mn(2+)</name>
        <dbReference type="ChEBI" id="CHEBI:29035"/>
    </ligand>
</feature>
<feature type="site" description="Important for exonuclease activity" evidence="1">
    <location>
        <position position="456"/>
    </location>
</feature>
<feature type="sequence variant">
    <original>D</original>
    <variation>N</variation>
    <location>
        <position position="214"/>
    </location>
</feature>
<feature type="sequence variant">
    <original>V</original>
    <variation>I</variation>
    <location>
        <position position="279"/>
    </location>
</feature>
<evidence type="ECO:0000255" key="1">
    <source>
        <dbReference type="HAMAP-Rule" id="MF_04085"/>
    </source>
</evidence>
<evidence type="ECO:0000269" key="2">
    <source>
    </source>
</evidence>
<comment type="function">
    <text evidence="1">Encapsidates the genome, protecting it from nucleases. The encapsidated genomic RNA is termed the nucleocapsid (NC). Serves as template for viral transcription and replication. The increased presence of protein N in host cell does not seem to trigger the switch from transcription to replication as observed in other negative strain RNA viruses. Through the interaction with host IKBKE, strongly inhibits the phosphorylation and nuclear translocation of host IRF3, a protein involved in interferon activation pathway, leading to the inhibition of interferon-beta and IRF3-dependent promoters activation. Also encodes a functional 3'-5' exoribonuclease that degrades preferentially dsRNA substrates and thereby participates in the suppression of interferon induction.</text>
</comment>
<comment type="subunit">
    <text evidence="1 2">Homomultimerizes to form the nucleocapsid. Binds to viral genomic RNA. Interacts with glycoprotein G2. Interacts with protein Z; this interaction probably directs the encapsidated genome to budding sites. Interacts with protein L; this interaction does not interfere with Z-L interaction. Interacts with host IKBKE (via Protein kinase domain); the interaction inhibits IKBKE kinase activity (PubMed:22532683).</text>
</comment>
<comment type="subcellular location">
    <subcellularLocation>
        <location evidence="1">Virion</location>
    </subcellularLocation>
    <subcellularLocation>
        <location evidence="1">Host cytoplasm</location>
    </subcellularLocation>
</comment>
<comment type="domain">
    <text evidence="1">The N-terminal region is important for the cap-binding activity while the C-terminal region contains the 3'-5' exoribonuclease activity. A CCHE zinc binding site is present in the C-terminal region and may thus contribute to the substrate binding and/or the specificity of the exonuclease activity.</text>
</comment>
<comment type="similarity">
    <text evidence="1">Belongs to the arenaviridae nucleocapsid protein family.</text>
</comment>
<accession>Q8BDE6</accession>
<accession>Q8BD29</accession>
<reference key="1">
    <citation type="journal article" date="2002" name="Virology">
        <title>High genetic divergence and recombination in Arenaviruses from the Americas.</title>
        <authorList>
            <person name="Archer A.M."/>
            <person name="Rico-Hesse R."/>
        </authorList>
    </citation>
    <scope>NUCLEOTIDE SEQUENCE [GENOMIC RNA]</scope>
</reference>
<reference key="2">
    <citation type="journal article" date="2002" name="Biochem. Biophys. Res. Commun.">
        <title>Phylogeny of New World arenaviruses based on the complete coding sequences of the small genomic segment identified an evolutionary lineage produced by intrasegmental recombination.</title>
        <authorList>
            <person name="Charrel R.N."/>
            <person name="Feldmann H."/>
            <person name="Fulhorst C.F."/>
            <person name="Khelifa R."/>
            <person name="de Chesse R."/>
            <person name="de Lamballerie X."/>
        </authorList>
    </citation>
    <scope>NUCLEOTIDE SEQUENCE [GENOMIC RNA]</scope>
</reference>
<reference key="3">
    <citation type="journal article" date="2008" name="Curr. Opin. Microbiol.">
        <title>Phylogeny of the genus Arenavirus.</title>
        <authorList>
            <person name="Charrel R.N."/>
            <person name="de Lamballerie X."/>
            <person name="Emonet S."/>
        </authorList>
    </citation>
    <scope>NUCLEOTIDE SEQUENCE [GENOMIC RNA]</scope>
</reference>
<reference key="4">
    <citation type="journal article" date="2012" name="J. Virol.">
        <title>Arenavirus nucleoprotein targets interferon regulatory factor-activating kinase IKKepsilon.</title>
        <authorList>
            <person name="Pythoud C."/>
            <person name="Rodrigo W.W."/>
            <person name="Pasqual G."/>
            <person name="Rothenberger S."/>
            <person name="Martinez-Sobrido L."/>
            <person name="de la Torre J.C."/>
            <person name="Kunz S."/>
        </authorList>
    </citation>
    <scope>INTERACTION WITH HOST IKBKE</scope>
</reference>
<organismHost>
    <name type="scientific">Calomys callosus</name>
    <name type="common">Large vesper mouse</name>
    <dbReference type="NCBI Taxonomy" id="56210"/>
</organismHost>
<organism>
    <name type="scientific">Latino mammarenavirus (isolate Rat/Bolivia/MARU 1924/1965)</name>
    <name type="common">LATV</name>
    <dbReference type="NCBI Taxonomy" id="3052311"/>
    <lineage>
        <taxon>Viruses</taxon>
        <taxon>Riboviria</taxon>
        <taxon>Orthornavirae</taxon>
        <taxon>Negarnaviricota</taxon>
        <taxon>Polyploviricotina</taxon>
        <taxon>Ellioviricetes</taxon>
        <taxon>Bunyavirales</taxon>
        <taxon>Arenaviridae</taxon>
        <taxon>Mammarenavirus</taxon>
    </lineage>
</organism>
<dbReference type="EC" id="3.1.13.-" evidence="1"/>
<dbReference type="EMBL" id="AF485259">
    <property type="protein sequence ID" value="AAN09941.1"/>
    <property type="molecule type" value="Genomic_RNA"/>
</dbReference>
<dbReference type="EMBL" id="AF512830">
    <property type="protein sequence ID" value="AAN32960.1"/>
    <property type="molecule type" value="Genomic_RNA"/>
</dbReference>
<dbReference type="RefSeq" id="YP_001936022.1">
    <property type="nucleotide sequence ID" value="NC_010758.1"/>
</dbReference>
<dbReference type="SMR" id="Q8BDE6"/>
<dbReference type="KEGG" id="vg:6334522"/>
<dbReference type="OrthoDB" id="3135at10239"/>
<dbReference type="Proteomes" id="UP000009262">
    <property type="component" value="Genome"/>
</dbReference>
<dbReference type="GO" id="GO:0019029">
    <property type="term" value="C:helical viral capsid"/>
    <property type="evidence" value="ECO:0007669"/>
    <property type="project" value="UniProtKB-UniRule"/>
</dbReference>
<dbReference type="GO" id="GO:0030430">
    <property type="term" value="C:host cell cytoplasm"/>
    <property type="evidence" value="ECO:0007669"/>
    <property type="project" value="UniProtKB-SubCell"/>
</dbReference>
<dbReference type="GO" id="GO:1990904">
    <property type="term" value="C:ribonucleoprotein complex"/>
    <property type="evidence" value="ECO:0007669"/>
    <property type="project" value="UniProtKB-KW"/>
</dbReference>
<dbReference type="GO" id="GO:0019013">
    <property type="term" value="C:viral nucleocapsid"/>
    <property type="evidence" value="ECO:0007669"/>
    <property type="project" value="UniProtKB-UniRule"/>
</dbReference>
<dbReference type="GO" id="GO:0016787">
    <property type="term" value="F:hydrolase activity"/>
    <property type="evidence" value="ECO:0007669"/>
    <property type="project" value="UniProtKB-KW"/>
</dbReference>
<dbReference type="GO" id="GO:0046872">
    <property type="term" value="F:metal ion binding"/>
    <property type="evidence" value="ECO:0007669"/>
    <property type="project" value="UniProtKB-UniRule"/>
</dbReference>
<dbReference type="GO" id="GO:0003723">
    <property type="term" value="F:RNA binding"/>
    <property type="evidence" value="ECO:0007669"/>
    <property type="project" value="UniProtKB-UniRule"/>
</dbReference>
<dbReference type="GO" id="GO:0039689">
    <property type="term" value="P:negative stranded viral RNA replication"/>
    <property type="evidence" value="ECO:0000250"/>
    <property type="project" value="UniProtKB"/>
</dbReference>
<dbReference type="GO" id="GO:0039696">
    <property type="term" value="P:RNA-templated viral transcription"/>
    <property type="evidence" value="ECO:0000250"/>
    <property type="project" value="UniProtKB"/>
</dbReference>
<dbReference type="GO" id="GO:0039724">
    <property type="term" value="P:symbiont-mediated suppression of host cytoplasmic pattern recognition receptor signaling pathway via inhibition of IKBKE activity"/>
    <property type="evidence" value="ECO:0007669"/>
    <property type="project" value="UniProtKB-UniRule"/>
</dbReference>
<dbReference type="FunFam" id="1.10.150.550:FF:000001">
    <property type="entry name" value="Nucleoprotein"/>
    <property type="match status" value="1"/>
</dbReference>
<dbReference type="FunFam" id="1.10.150.550:FF:000002">
    <property type="entry name" value="Nucleoprotein"/>
    <property type="match status" value="1"/>
</dbReference>
<dbReference type="Gene3D" id="3.30.420.410">
    <property type="entry name" value="Arenaviral nucleoprotein, C-terminal domain"/>
    <property type="match status" value="1"/>
</dbReference>
<dbReference type="Gene3D" id="1.10.150.550">
    <property type="entry name" value="Arenavirus nucleocapsid protein, head domain"/>
    <property type="match status" value="3"/>
</dbReference>
<dbReference type="HAMAP" id="MF_04085">
    <property type="entry name" value="ARENA_NCAP"/>
    <property type="match status" value="1"/>
</dbReference>
<dbReference type="InterPro" id="IPR000229">
    <property type="entry name" value="Nucleocapsid_arenaviridae"/>
</dbReference>
<dbReference type="InterPro" id="IPR035084">
    <property type="entry name" value="Nucleocapsid_C_arenaviridae"/>
</dbReference>
<dbReference type="InterPro" id="IPR038115">
    <property type="entry name" value="Nucleocapsid_C_sf"/>
</dbReference>
<dbReference type="InterPro" id="IPR035083">
    <property type="entry name" value="Nucleocapsid_N_arenaviridae"/>
</dbReference>
<dbReference type="Pfam" id="PF17290">
    <property type="entry name" value="Arena_ncap_C"/>
    <property type="match status" value="1"/>
</dbReference>
<dbReference type="Pfam" id="PF00843">
    <property type="entry name" value="Arena_nucleocap"/>
    <property type="match status" value="1"/>
</dbReference>
<dbReference type="PIRSF" id="PIRSF004029">
    <property type="entry name" value="N_ArenaV"/>
    <property type="match status" value="1"/>
</dbReference>
<keyword id="KW-0167">Capsid protein</keyword>
<keyword id="KW-1139">Helical capsid protein</keyword>
<keyword id="KW-1035">Host cytoplasm</keyword>
<keyword id="KW-0945">Host-virus interaction</keyword>
<keyword id="KW-0378">Hydrolase</keyword>
<keyword id="KW-1224">Inhibition of host IKBKE by virus</keyword>
<keyword id="KW-1090">Inhibition of host innate immune response by virus</keyword>
<keyword id="KW-1113">Inhibition of host RLR pathway by virus</keyword>
<keyword id="KW-0922">Interferon antiviral system evasion</keyword>
<keyword id="KW-0464">Manganese</keyword>
<keyword id="KW-0479">Metal-binding</keyword>
<keyword id="KW-1185">Reference proteome</keyword>
<keyword id="KW-0687">Ribonucleoprotein</keyword>
<keyword id="KW-0694">RNA-binding</keyword>
<keyword id="KW-0899">Viral immunoevasion</keyword>
<keyword id="KW-0543">Viral nucleoprotein</keyword>
<keyword id="KW-0946">Virion</keyword>
<keyword id="KW-0862">Zinc</keyword>